<gene>
    <name evidence="6" type="primary">HOG1</name>
    <name type="ORF">UVI_02006980</name>
</gene>
<accession>A0A1B5KW97</accession>
<reference key="1">
    <citation type="journal article" date="2016" name="Genome Announc.">
        <title>Genome sequence of Ustilaginoidea virens IPU010, a rice pathogenic fungus causing false smut.</title>
        <authorList>
            <person name="Kumagai T."/>
            <person name="Ishii T."/>
            <person name="Terai G."/>
            <person name="Umemura M."/>
            <person name="Machida M."/>
            <person name="Asai K."/>
        </authorList>
    </citation>
    <scope>NUCLEOTIDE SEQUENCE [LARGE SCALE GENOMIC DNA]</scope>
    <source>
        <strain>IPU010</strain>
    </source>
</reference>
<reference key="2">
    <citation type="journal article" date="2016" name="Sci. Rep.">
        <title>UvHOG1 is important for hyphal growth and stress responses in the rice false smut fungus Ustilaginoidea virens.</title>
        <authorList>
            <person name="Zheng D."/>
            <person name="Wang Y."/>
            <person name="Han Y."/>
            <person name="Xu J.R."/>
            <person name="Wang C."/>
        </authorList>
    </citation>
    <scope>FUNCTION</scope>
    <scope>DISRUPTION PHENOTYPE</scope>
</reference>
<organism>
    <name type="scientific">Ustilaginoidea virens</name>
    <name type="common">Rice false smut fungus</name>
    <name type="synonym">Villosiclava virens</name>
    <dbReference type="NCBI Taxonomy" id="1159556"/>
    <lineage>
        <taxon>Eukaryota</taxon>
        <taxon>Fungi</taxon>
        <taxon>Dikarya</taxon>
        <taxon>Ascomycota</taxon>
        <taxon>Pezizomycotina</taxon>
        <taxon>Sordariomycetes</taxon>
        <taxon>Hypocreomycetidae</taxon>
        <taxon>Hypocreales</taxon>
        <taxon>Clavicipitaceae</taxon>
        <taxon>Ustilaginoidea</taxon>
    </lineage>
</organism>
<comment type="function">
    <text evidence="5">Proline-directed serine/threonine-protein kinase involved in a signal transduction pathway that is activated by changes in the osmolarity of the extracellular environment (PubMed:27095476). Controls osmotic regulation of transcription of target genes (PubMed:27095476). Involved in environmental stress response, hyphal growth, conidiation and possibly secondary metabolism such as ustiloxin biosynthesis or the biosynthesis of other phytotoxic compounds that are inhibitory to rice shoot growth during seed germination (PubMed:27095476). Plays a key role in responses to cell wall and membrane stresses but not oxidative stress (PubMed:27095476).</text>
</comment>
<comment type="catalytic activity">
    <reaction evidence="1">
        <text>L-seryl-[protein] + ATP = O-phospho-L-seryl-[protein] + ADP + H(+)</text>
        <dbReference type="Rhea" id="RHEA:17989"/>
        <dbReference type="Rhea" id="RHEA-COMP:9863"/>
        <dbReference type="Rhea" id="RHEA-COMP:11604"/>
        <dbReference type="ChEBI" id="CHEBI:15378"/>
        <dbReference type="ChEBI" id="CHEBI:29999"/>
        <dbReference type="ChEBI" id="CHEBI:30616"/>
        <dbReference type="ChEBI" id="CHEBI:83421"/>
        <dbReference type="ChEBI" id="CHEBI:456216"/>
        <dbReference type="EC" id="2.7.11.24"/>
    </reaction>
    <physiologicalReaction direction="left-to-right" evidence="1">
        <dbReference type="Rhea" id="RHEA:17990"/>
    </physiologicalReaction>
</comment>
<comment type="catalytic activity">
    <reaction evidence="1">
        <text>L-threonyl-[protein] + ATP = O-phospho-L-threonyl-[protein] + ADP + H(+)</text>
        <dbReference type="Rhea" id="RHEA:46608"/>
        <dbReference type="Rhea" id="RHEA-COMP:11060"/>
        <dbReference type="Rhea" id="RHEA-COMP:11605"/>
        <dbReference type="ChEBI" id="CHEBI:15378"/>
        <dbReference type="ChEBI" id="CHEBI:30013"/>
        <dbReference type="ChEBI" id="CHEBI:30616"/>
        <dbReference type="ChEBI" id="CHEBI:61977"/>
        <dbReference type="ChEBI" id="CHEBI:456216"/>
        <dbReference type="EC" id="2.7.11.24"/>
    </reaction>
    <physiologicalReaction direction="left-to-right" evidence="1">
        <dbReference type="Rhea" id="RHEA:46609"/>
    </physiologicalReaction>
</comment>
<comment type="cofactor">
    <cofactor evidence="2">
        <name>Mg(2+)</name>
        <dbReference type="ChEBI" id="CHEBI:18420"/>
    </cofactor>
</comment>
<comment type="subcellular location">
    <subcellularLocation>
        <location evidence="3">Cytoplasm</location>
    </subcellularLocation>
    <subcellularLocation>
        <location evidence="3">Nucleus</location>
    </subcellularLocation>
    <text evidence="3">Translocates to the nucleus upon stressresponse.</text>
</comment>
<comment type="domain">
    <text evidence="1">The TXY motif contains the threonine and tyrosine residues whose phosphorylation activates the MAP kinases.</text>
</comment>
<comment type="disruption phenotype">
    <text evidence="5">Leads to reduced growth rate and conidiation but shows increased sensitivities to SDS, Congo red, and hyperosmotic stress (PubMed:27095476). Results in reduced expression of the stress response-related genes ATF1 and SKN7 (PubMed:27095476). Moreover, NaCl treatment fails to stimulate the accumulation of sorbitol and glycerol (PubMed:27095476). Reduces the expression of the ustyloxin biosynthesis cluster USTA gene (PubMed:27095476). Finally, reduces toxicity on shoot growth in rice seed germination assays (PubMed:27095476).</text>
</comment>
<comment type="similarity">
    <text evidence="7">Belongs to the protein kinase superfamily. Ser/Thr protein kinase family. MAP kinase subfamily. HOG1 sub-subfamily.</text>
</comment>
<sequence length="365" mass="41782">MAEFVRAQIFGTTFEITSRYSDLQPVGMGAFGLVCSARDQLTNQNVAVKKIMKPFSTPVLAKRTYRELKLLKHLKHENVISLSDIFISPLEDIVLRWGCSYFVTELLGTDLHRLLTSRPLEKQFIQYFLYQIMRGLKYVHSAGVVHRDLKPSNILVNENCDLKICDFGLARIQDPQMTGYVSTRYYRAPEIMLTWQKYDVEVDIWSAGCIFAEMLEGKPLFPGKDHVNQFSIITELLGTPPDDVINTIASENTLRFVKSLPKRERQSLKHKFKNADAPAIDLLESMLVFDPKKRITATNALAHEYLAPYHDPTDEPVAEEKFDWSFNDADLPVDTWKIMMYSEILDYHNVEAGVAAMEGQEFNGQ</sequence>
<dbReference type="EC" id="2.7.11.24" evidence="1"/>
<dbReference type="EMBL" id="BBTG02000002">
    <property type="protein sequence ID" value="GAO15210.1"/>
    <property type="molecule type" value="Genomic_DNA"/>
</dbReference>
<dbReference type="Proteomes" id="UP000054053">
    <property type="component" value="Unassembled WGS sequence"/>
</dbReference>
<dbReference type="GO" id="GO:0005634">
    <property type="term" value="C:nucleus"/>
    <property type="evidence" value="ECO:0007669"/>
    <property type="project" value="UniProtKB-SubCell"/>
</dbReference>
<dbReference type="GO" id="GO:0005524">
    <property type="term" value="F:ATP binding"/>
    <property type="evidence" value="ECO:0007669"/>
    <property type="project" value="UniProtKB-UniRule"/>
</dbReference>
<dbReference type="GO" id="GO:0004707">
    <property type="term" value="F:MAP kinase activity"/>
    <property type="evidence" value="ECO:0007669"/>
    <property type="project" value="UniProtKB-EC"/>
</dbReference>
<dbReference type="GO" id="GO:0051403">
    <property type="term" value="P:stress-activated MAPK cascade"/>
    <property type="evidence" value="ECO:0007669"/>
    <property type="project" value="InterPro"/>
</dbReference>
<dbReference type="CDD" id="cd07856">
    <property type="entry name" value="STKc_Sty1_Hog1"/>
    <property type="match status" value="1"/>
</dbReference>
<dbReference type="FunFam" id="1.10.510.10:FF:000049">
    <property type="entry name" value="Mitogen-activated protein kinase"/>
    <property type="match status" value="1"/>
</dbReference>
<dbReference type="FunFam" id="3.30.200.20:FF:000050">
    <property type="entry name" value="Mitogen-activated protein kinase"/>
    <property type="match status" value="1"/>
</dbReference>
<dbReference type="Gene3D" id="3.30.200.20">
    <property type="entry name" value="Phosphorylase Kinase, domain 1"/>
    <property type="match status" value="1"/>
</dbReference>
<dbReference type="Gene3D" id="1.10.510.10">
    <property type="entry name" value="Transferase(Phosphotransferase) domain 1"/>
    <property type="match status" value="1"/>
</dbReference>
<dbReference type="InterPro" id="IPR011009">
    <property type="entry name" value="Kinase-like_dom_sf"/>
</dbReference>
<dbReference type="InterPro" id="IPR050117">
    <property type="entry name" value="MAP_kinase"/>
</dbReference>
<dbReference type="InterPro" id="IPR003527">
    <property type="entry name" value="MAP_kinase_CS"/>
</dbReference>
<dbReference type="InterPro" id="IPR038783">
    <property type="entry name" value="MAPK_Sty1/Hog1"/>
</dbReference>
<dbReference type="InterPro" id="IPR000719">
    <property type="entry name" value="Prot_kinase_dom"/>
</dbReference>
<dbReference type="InterPro" id="IPR017441">
    <property type="entry name" value="Protein_kinase_ATP_BS"/>
</dbReference>
<dbReference type="InterPro" id="IPR008271">
    <property type="entry name" value="Ser/Thr_kinase_AS"/>
</dbReference>
<dbReference type="PANTHER" id="PTHR24055">
    <property type="entry name" value="MITOGEN-ACTIVATED PROTEIN KINASE"/>
    <property type="match status" value="1"/>
</dbReference>
<dbReference type="Pfam" id="PF00069">
    <property type="entry name" value="Pkinase"/>
    <property type="match status" value="1"/>
</dbReference>
<dbReference type="SMART" id="SM00220">
    <property type="entry name" value="S_TKc"/>
    <property type="match status" value="1"/>
</dbReference>
<dbReference type="SUPFAM" id="SSF56112">
    <property type="entry name" value="Protein kinase-like (PK-like)"/>
    <property type="match status" value="1"/>
</dbReference>
<dbReference type="PROSITE" id="PS01351">
    <property type="entry name" value="MAPK"/>
    <property type="match status" value="1"/>
</dbReference>
<dbReference type="PROSITE" id="PS00107">
    <property type="entry name" value="PROTEIN_KINASE_ATP"/>
    <property type="match status" value="1"/>
</dbReference>
<dbReference type="PROSITE" id="PS50011">
    <property type="entry name" value="PROTEIN_KINASE_DOM"/>
    <property type="match status" value="1"/>
</dbReference>
<dbReference type="PROSITE" id="PS00108">
    <property type="entry name" value="PROTEIN_KINASE_ST"/>
    <property type="match status" value="1"/>
</dbReference>
<evidence type="ECO:0000250" key="1">
    <source>
        <dbReference type="UniProtKB" id="P32485"/>
    </source>
</evidence>
<evidence type="ECO:0000250" key="2">
    <source>
        <dbReference type="UniProtKB" id="Q16539"/>
    </source>
</evidence>
<evidence type="ECO:0000250" key="3">
    <source>
        <dbReference type="UniProtKB" id="Q4WSF6"/>
    </source>
</evidence>
<evidence type="ECO:0000255" key="4">
    <source>
        <dbReference type="PROSITE-ProRule" id="PRU00159"/>
    </source>
</evidence>
<evidence type="ECO:0000269" key="5">
    <source>
    </source>
</evidence>
<evidence type="ECO:0000303" key="6">
    <source>
    </source>
</evidence>
<evidence type="ECO:0000305" key="7"/>
<protein>
    <recommendedName>
        <fullName evidence="6">Mitogen-activated protein kinase HOG1</fullName>
        <shortName evidence="6">MAP kinase HOG1</shortName>
        <ecNumber evidence="1">2.7.11.24</ecNumber>
    </recommendedName>
</protein>
<proteinExistence type="inferred from homology"/>
<keyword id="KW-0067">ATP-binding</keyword>
<keyword id="KW-0963">Cytoplasm</keyword>
<keyword id="KW-0418">Kinase</keyword>
<keyword id="KW-0460">Magnesium</keyword>
<keyword id="KW-0547">Nucleotide-binding</keyword>
<keyword id="KW-0539">Nucleus</keyword>
<keyword id="KW-0723">Serine/threonine-protein kinase</keyword>
<keyword id="KW-0804">Transcription</keyword>
<keyword id="KW-0805">Transcription regulation</keyword>
<keyword id="KW-0808">Transferase</keyword>
<keyword id="KW-0843">Virulence</keyword>
<feature type="chain" id="PRO_0000462288" description="Mitogen-activated protein kinase HOG1">
    <location>
        <begin position="1"/>
        <end position="365"/>
    </location>
</feature>
<feature type="domain" description="Protein kinase" evidence="4">
    <location>
        <begin position="20"/>
        <end position="306"/>
    </location>
</feature>
<feature type="short sequence motif" description="TXY" evidence="1">
    <location>
        <begin position="178"/>
        <end position="180"/>
    </location>
</feature>
<feature type="active site" description="Proton acceptor" evidence="4">
    <location>
        <position position="148"/>
    </location>
</feature>
<feature type="binding site" evidence="4">
    <location>
        <begin position="26"/>
        <end position="34"/>
    </location>
    <ligand>
        <name>ATP</name>
        <dbReference type="ChEBI" id="CHEBI:30616"/>
    </ligand>
</feature>
<feature type="binding site" evidence="4">
    <location>
        <position position="49"/>
    </location>
    <ligand>
        <name>ATP</name>
        <dbReference type="ChEBI" id="CHEBI:30616"/>
    </ligand>
</feature>
<name>HOG1_USTVR</name>